<evidence type="ECO:0000255" key="1">
    <source>
        <dbReference type="HAMAP-Rule" id="MF_01180"/>
    </source>
</evidence>
<keyword id="KW-1005">Bacterial flagellum biogenesis</keyword>
<keyword id="KW-0143">Chaperone</keyword>
<keyword id="KW-0963">Cytoplasm</keyword>
<keyword id="KW-1185">Reference proteome</keyword>
<keyword id="KW-0678">Repressor</keyword>
<keyword id="KW-0804">Transcription</keyword>
<keyword id="KW-0805">Transcription regulation</keyword>
<accession>A8AF95</accession>
<proteinExistence type="inferred from homology"/>
<sequence length="120" mass="13569">MTNFIPSLTDWHALHALSITMLDLAHSGKWDELIEQEMNYVQLVEGIARNPISPGNTFLINQAKEILNAVLRNEAELKTLLQHRMEELRQLIDQTGKQQSVSTTYGNLAGNILFPSNLNQ</sequence>
<feature type="chain" id="PRO_0000353872" description="Flagellar protein FliT">
    <location>
        <begin position="1"/>
        <end position="120"/>
    </location>
</feature>
<feature type="region of interest" description="Required for homodimerization" evidence="1">
    <location>
        <begin position="1"/>
        <end position="50"/>
    </location>
</feature>
<feature type="region of interest" description="FliD binding" evidence="1">
    <location>
        <begin position="59"/>
        <end position="97"/>
    </location>
</feature>
<organism>
    <name type="scientific">Citrobacter koseri (strain ATCC BAA-895 / CDC 4225-83 / SGSC4696)</name>
    <dbReference type="NCBI Taxonomy" id="290338"/>
    <lineage>
        <taxon>Bacteria</taxon>
        <taxon>Pseudomonadati</taxon>
        <taxon>Pseudomonadota</taxon>
        <taxon>Gammaproteobacteria</taxon>
        <taxon>Enterobacterales</taxon>
        <taxon>Enterobacteriaceae</taxon>
        <taxon>Citrobacter</taxon>
    </lineage>
</organism>
<comment type="function">
    <text evidence="1">Dual-function protein that regulates the transcription of class 2 flagellar operons and that also acts as an export chaperone for the filament-capping protein FliD. As a transcriptional regulator, acts as an anti-FlhDC factor; it directly binds FlhC, thus inhibiting the binding of the FlhC/FlhD complex to class 2 promoters, resulting in decreased expression of class 2 flagellar operons. As a chaperone, effects FliD transition to the membrane by preventing its premature polymerization, and by directing it to the export apparatus.</text>
</comment>
<comment type="subunit">
    <text evidence="1">Homodimer. Interacts with FliD and FlhC.</text>
</comment>
<comment type="subcellular location">
    <subcellularLocation>
        <location evidence="1">Cytoplasm</location>
        <location evidence="1">Cytosol</location>
    </subcellularLocation>
</comment>
<comment type="similarity">
    <text evidence="1">Belongs to the FliT family.</text>
</comment>
<name>FLIT_CITK8</name>
<reference key="1">
    <citation type="submission" date="2007-08" db="EMBL/GenBank/DDBJ databases">
        <authorList>
            <consortium name="The Citrobacter koseri Genome Sequencing Project"/>
            <person name="McClelland M."/>
            <person name="Sanderson E.K."/>
            <person name="Porwollik S."/>
            <person name="Spieth J."/>
            <person name="Clifton W.S."/>
            <person name="Latreille P."/>
            <person name="Courtney L."/>
            <person name="Wang C."/>
            <person name="Pepin K."/>
            <person name="Bhonagiri V."/>
            <person name="Nash W."/>
            <person name="Johnson M."/>
            <person name="Thiruvilangam P."/>
            <person name="Wilson R."/>
        </authorList>
    </citation>
    <scope>NUCLEOTIDE SEQUENCE [LARGE SCALE GENOMIC DNA]</scope>
    <source>
        <strain>ATCC BAA-895 / CDC 4225-83 / SGSC4696</strain>
    </source>
</reference>
<protein>
    <recommendedName>
        <fullName evidence="1">Flagellar protein FliT</fullName>
    </recommendedName>
</protein>
<gene>
    <name evidence="1" type="primary">fliT</name>
    <name type="ordered locus">CKO_01012</name>
</gene>
<dbReference type="EMBL" id="CP000822">
    <property type="protein sequence ID" value="ABV12158.1"/>
    <property type="molecule type" value="Genomic_DNA"/>
</dbReference>
<dbReference type="RefSeq" id="WP_012131914.1">
    <property type="nucleotide sequence ID" value="NC_009792.1"/>
</dbReference>
<dbReference type="SMR" id="A8AF95"/>
<dbReference type="STRING" id="290338.CKO_01012"/>
<dbReference type="GeneID" id="45135174"/>
<dbReference type="KEGG" id="cko:CKO_01012"/>
<dbReference type="HOGENOM" id="CLU_155793_1_0_6"/>
<dbReference type="OrthoDB" id="6494117at2"/>
<dbReference type="Proteomes" id="UP000008148">
    <property type="component" value="Chromosome"/>
</dbReference>
<dbReference type="GO" id="GO:0005829">
    <property type="term" value="C:cytosol"/>
    <property type="evidence" value="ECO:0007669"/>
    <property type="project" value="UniProtKB-SubCell"/>
</dbReference>
<dbReference type="GO" id="GO:0044781">
    <property type="term" value="P:bacterial-type flagellum organization"/>
    <property type="evidence" value="ECO:0007669"/>
    <property type="project" value="UniProtKB-KW"/>
</dbReference>
<dbReference type="GO" id="GO:1902209">
    <property type="term" value="P:negative regulation of bacterial-type flagellum assembly"/>
    <property type="evidence" value="ECO:0007669"/>
    <property type="project" value="UniProtKB-UniRule"/>
</dbReference>
<dbReference type="GO" id="GO:0006457">
    <property type="term" value="P:protein folding"/>
    <property type="evidence" value="ECO:0007669"/>
    <property type="project" value="UniProtKB-UniRule"/>
</dbReference>
<dbReference type="Gene3D" id="1.20.58.380">
    <property type="entry name" value="Flagellar protein flit"/>
    <property type="match status" value="1"/>
</dbReference>
<dbReference type="HAMAP" id="MF_01180">
    <property type="entry name" value="FliT"/>
    <property type="match status" value="1"/>
</dbReference>
<dbReference type="InterPro" id="IPR008622">
    <property type="entry name" value="FliT"/>
</dbReference>
<dbReference type="NCBIfam" id="NF007836">
    <property type="entry name" value="PRK10548.1"/>
    <property type="match status" value="1"/>
</dbReference>
<dbReference type="Pfam" id="PF05400">
    <property type="entry name" value="FliT"/>
    <property type="match status" value="1"/>
</dbReference>